<organism>
    <name type="scientific">Yarrowia lipolytica (strain CLIB 122 / E 150)</name>
    <name type="common">Yeast</name>
    <name type="synonym">Candida lipolytica</name>
    <dbReference type="NCBI Taxonomy" id="284591"/>
    <lineage>
        <taxon>Eukaryota</taxon>
        <taxon>Fungi</taxon>
        <taxon>Dikarya</taxon>
        <taxon>Ascomycota</taxon>
        <taxon>Saccharomycotina</taxon>
        <taxon>Dipodascomycetes</taxon>
        <taxon>Dipodascales</taxon>
        <taxon>Dipodascales incertae sedis</taxon>
        <taxon>Yarrowia</taxon>
    </lineage>
</organism>
<reference key="1">
    <citation type="journal article" date="2004" name="Nature">
        <title>Genome evolution in yeasts.</title>
        <authorList>
            <person name="Dujon B."/>
            <person name="Sherman D."/>
            <person name="Fischer G."/>
            <person name="Durrens P."/>
            <person name="Casaregola S."/>
            <person name="Lafontaine I."/>
            <person name="de Montigny J."/>
            <person name="Marck C."/>
            <person name="Neuveglise C."/>
            <person name="Talla E."/>
            <person name="Goffard N."/>
            <person name="Frangeul L."/>
            <person name="Aigle M."/>
            <person name="Anthouard V."/>
            <person name="Babour A."/>
            <person name="Barbe V."/>
            <person name="Barnay S."/>
            <person name="Blanchin S."/>
            <person name="Beckerich J.-M."/>
            <person name="Beyne E."/>
            <person name="Bleykasten C."/>
            <person name="Boisrame A."/>
            <person name="Boyer J."/>
            <person name="Cattolico L."/>
            <person name="Confanioleri F."/>
            <person name="de Daruvar A."/>
            <person name="Despons L."/>
            <person name="Fabre E."/>
            <person name="Fairhead C."/>
            <person name="Ferry-Dumazet H."/>
            <person name="Groppi A."/>
            <person name="Hantraye F."/>
            <person name="Hennequin C."/>
            <person name="Jauniaux N."/>
            <person name="Joyet P."/>
            <person name="Kachouri R."/>
            <person name="Kerrest A."/>
            <person name="Koszul R."/>
            <person name="Lemaire M."/>
            <person name="Lesur I."/>
            <person name="Ma L."/>
            <person name="Muller H."/>
            <person name="Nicaud J.-M."/>
            <person name="Nikolski M."/>
            <person name="Oztas S."/>
            <person name="Ozier-Kalogeropoulos O."/>
            <person name="Pellenz S."/>
            <person name="Potier S."/>
            <person name="Richard G.-F."/>
            <person name="Straub M.-L."/>
            <person name="Suleau A."/>
            <person name="Swennen D."/>
            <person name="Tekaia F."/>
            <person name="Wesolowski-Louvel M."/>
            <person name="Westhof E."/>
            <person name="Wirth B."/>
            <person name="Zeniou-Meyer M."/>
            <person name="Zivanovic Y."/>
            <person name="Bolotin-Fukuhara M."/>
            <person name="Thierry A."/>
            <person name="Bouchier C."/>
            <person name="Caudron B."/>
            <person name="Scarpelli C."/>
            <person name="Gaillardin C."/>
            <person name="Weissenbach J."/>
            <person name="Wincker P."/>
            <person name="Souciet J.-L."/>
        </authorList>
    </citation>
    <scope>NUCLEOTIDE SEQUENCE [LARGE SCALE GENOMIC DNA]</scope>
    <source>
        <strain>CLIB 122 / E 150</strain>
    </source>
</reference>
<keyword id="KW-0072">Autophagy</keyword>
<keyword id="KW-0967">Endosome</keyword>
<keyword id="KW-0472">Membrane</keyword>
<keyword id="KW-0653">Protein transport</keyword>
<keyword id="KW-1185">Reference proteome</keyword>
<keyword id="KW-0813">Transport</keyword>
<keyword id="KW-0926">Vacuole</keyword>
<feature type="chain" id="PRO_0000278867" description="Vacuolar fusion protein MON1">
    <location>
        <begin position="1"/>
        <end position="543"/>
    </location>
</feature>
<feature type="region of interest" description="Disordered" evidence="3">
    <location>
        <begin position="41"/>
        <end position="65"/>
    </location>
</feature>
<feature type="compositionally biased region" description="Low complexity" evidence="3">
    <location>
        <begin position="41"/>
        <end position="57"/>
    </location>
</feature>
<proteinExistence type="inferred from homology"/>
<sequence length="543" mass="60437">MEDGAKDDYIKDIYRHASPNADTDSFLGSPTVAIDSTLSTSNSLSNLNLDTNDSSSSPPAHNDDVPDIAEVLQEMLATTELPSSTTDLDYEPELDLVGGHRRNLGQLNDYGSPRADSFVSLDPPSIGTEVEQFLSKKKQFFILSSAGKPIYTLHGSDDVILGYLGVLQTVVSAYQADESGDNLMSFRAGKTLVVVAVEGPLILAAVSKIGESESQLRAQLDVLYTQILSTLTKNQIHRIYANQSNFDLRNLLQGTDVYLDALTREIVNGSPSILLGALEPLILRKSIREEIDGVLLSCRTPSLLYGLIVSDSKLANVIRPKKHSLHPPDLILLFSMLFNTTSFRDGEHWVPICLPKFNSTGFLYAYIHFFSKSSALIQISADKNAFFELREAKQQILSQMEDKGLIKALERAEERGRFKPVDVAVPMVRHFLYKSRAHVQYVMPSYETHYYEPHMQRGLLTFYHQLHAQVNSDSSRGSNNGWRFMHLVRNSCIGFAWITPSFELYCVSGPNVSRATLAASIHSIAKWVSQHRERLFVIGGAVF</sequence>
<accession>Q6CCU8</accession>
<comment type="function">
    <text evidence="2">In complex with YALI0F03861p/CCZ1, is required for multiple vacuole delivery pathways including the cytoplasm to vacuole transport (Cvt), autophagy, pexophagy and endocytosis. The MON1-CCZ1 complex acts at the fusion of vesicles with the vacuole, through its regulation of the SNARE complex during the coordinated priming and docking stages of fusion, and particularly at the stage of tethering/docking.</text>
</comment>
<comment type="subcellular location">
    <subcellularLocation>
        <location evidence="1">Endosome</location>
        <location evidence="1">Multivesicular body membrane</location>
        <topology evidence="1">Peripheral membrane protein</topology>
    </subcellularLocation>
    <subcellularLocation>
        <location evidence="1">Prevacuolar compartment membrane</location>
        <topology evidence="1">Peripheral membrane protein</topology>
    </subcellularLocation>
    <subcellularLocation>
        <location evidence="1">Vacuole membrane</location>
        <topology evidence="1">Peripheral membrane protein</topology>
    </subcellularLocation>
</comment>
<comment type="similarity">
    <text evidence="4">Belongs to the MON1/SAND family.</text>
</comment>
<name>MON1_YARLI</name>
<evidence type="ECO:0000250" key="1"/>
<evidence type="ECO:0000250" key="2">
    <source>
        <dbReference type="UniProtKB" id="P53129"/>
    </source>
</evidence>
<evidence type="ECO:0000256" key="3">
    <source>
        <dbReference type="SAM" id="MobiDB-lite"/>
    </source>
</evidence>
<evidence type="ECO:0000305" key="4"/>
<protein>
    <recommendedName>
        <fullName>Vacuolar fusion protein MON1</fullName>
    </recommendedName>
</protein>
<gene>
    <name type="primary">MON1</name>
    <name type="ordered locus">YALI0C06347g</name>
</gene>
<dbReference type="EMBL" id="CR382129">
    <property type="protein sequence ID" value="CAG81815.1"/>
    <property type="molecule type" value="Genomic_DNA"/>
</dbReference>
<dbReference type="RefSeq" id="XP_501514.1">
    <property type="nucleotide sequence ID" value="XM_501514.1"/>
</dbReference>
<dbReference type="SMR" id="Q6CCU8"/>
<dbReference type="FunCoup" id="Q6CCU8">
    <property type="interactions" value="556"/>
</dbReference>
<dbReference type="STRING" id="284591.Q6CCU8"/>
<dbReference type="EnsemblFungi" id="CAG81815">
    <property type="protein sequence ID" value="CAG81815"/>
    <property type="gene ID" value="YALI0_C06347g"/>
</dbReference>
<dbReference type="KEGG" id="yli:2909308"/>
<dbReference type="VEuPathDB" id="FungiDB:YALI0_C06347g"/>
<dbReference type="HOGENOM" id="CLU_014574_1_1_1"/>
<dbReference type="InParanoid" id="Q6CCU8"/>
<dbReference type="OMA" id="TKTCAIT"/>
<dbReference type="OrthoDB" id="127410at4891"/>
<dbReference type="Proteomes" id="UP000001300">
    <property type="component" value="Chromosome C"/>
</dbReference>
<dbReference type="GO" id="GO:0000329">
    <property type="term" value="C:fungal-type vacuole membrane"/>
    <property type="evidence" value="ECO:0000318"/>
    <property type="project" value="GO_Central"/>
</dbReference>
<dbReference type="GO" id="GO:0035658">
    <property type="term" value="C:Mon1-Ccz1 complex"/>
    <property type="evidence" value="ECO:0000318"/>
    <property type="project" value="GO_Central"/>
</dbReference>
<dbReference type="GO" id="GO:0032585">
    <property type="term" value="C:multivesicular body membrane"/>
    <property type="evidence" value="ECO:0007669"/>
    <property type="project" value="UniProtKB-SubCell"/>
</dbReference>
<dbReference type="GO" id="GO:0006914">
    <property type="term" value="P:autophagy"/>
    <property type="evidence" value="ECO:0007669"/>
    <property type="project" value="UniProtKB-KW"/>
</dbReference>
<dbReference type="GO" id="GO:0006623">
    <property type="term" value="P:protein targeting to vacuole"/>
    <property type="evidence" value="ECO:0000318"/>
    <property type="project" value="GO_Central"/>
</dbReference>
<dbReference type="GO" id="GO:0016192">
    <property type="term" value="P:vesicle-mediated transport"/>
    <property type="evidence" value="ECO:0007669"/>
    <property type="project" value="InterPro"/>
</dbReference>
<dbReference type="InterPro" id="IPR043972">
    <property type="entry name" value="FUZ/MON1/HPS1_longin_1"/>
</dbReference>
<dbReference type="InterPro" id="IPR043971">
    <property type="entry name" value="FUZ/MON1/HPS1_longin_2"/>
</dbReference>
<dbReference type="InterPro" id="IPR043970">
    <property type="entry name" value="FUZ/MON1/HPS1_longin_3"/>
</dbReference>
<dbReference type="InterPro" id="IPR004353">
    <property type="entry name" value="Mon1"/>
</dbReference>
<dbReference type="PANTHER" id="PTHR13027">
    <property type="entry name" value="SAND PROTEIN-RELATED"/>
    <property type="match status" value="1"/>
</dbReference>
<dbReference type="PANTHER" id="PTHR13027:SF7">
    <property type="entry name" value="VACUOLAR FUSION PROTEIN MON1 HOMOLOG"/>
    <property type="match status" value="1"/>
</dbReference>
<dbReference type="Pfam" id="PF19036">
    <property type="entry name" value="Fuz_longin_1"/>
    <property type="match status" value="1"/>
</dbReference>
<dbReference type="Pfam" id="PF19037">
    <property type="entry name" value="Fuz_longin_2"/>
    <property type="match status" value="1"/>
</dbReference>
<dbReference type="Pfam" id="PF19038">
    <property type="entry name" value="Fuz_longin_3"/>
    <property type="match status" value="1"/>
</dbReference>
<dbReference type="PRINTS" id="PR01546">
    <property type="entry name" value="YEAST73DUF"/>
</dbReference>